<sequence>MEEPGAQCAPPPPAGSETWVPQANLSSAPSQNCSAKDYIYQDSISLPWKVLLVMLLALITLATTLSNAFVIATVYRTRKLHTPANYLIASLAVTDLLVSILVMPISTMYTVTGRWTLGQVVCDFWLSSDITCCTASILHLCVIALDRYWAITDAVEYSAKRTPKRAAVMIALVWVFSISISLPPFFWRQAKAEEEVSECVVNTDHILYTVYSTVGAFYFPTLLLIALYGRIYVEARSRILKQTPNRTGKRLTRAQLITDSPGSTSSVTSINSRVPDVPSESGSPVYVNQVKVRVSDALLEKKKLMAARERKATKTLGIILGAFIVCWLPFFIISLVMPICKDACWFHLAIFDFFTWLGYLNSLINPIIYTMSNEDFKQAFHKLIRFKCTS</sequence>
<name>5HT1B_PANTR</name>
<evidence type="ECO:0000250" key="1">
    <source>
        <dbReference type="UniProtKB" id="P28222"/>
    </source>
</evidence>
<evidence type="ECO:0000250" key="2">
    <source>
        <dbReference type="UniProtKB" id="P41595"/>
    </source>
</evidence>
<evidence type="ECO:0000255" key="3"/>
<evidence type="ECO:0000255" key="4">
    <source>
        <dbReference type="PROSITE-ProRule" id="PRU00521"/>
    </source>
</evidence>
<evidence type="ECO:0000256" key="5">
    <source>
        <dbReference type="SAM" id="MobiDB-lite"/>
    </source>
</evidence>
<reference key="1">
    <citation type="journal article" date="2004" name="Mol. Biol. Evol.">
        <title>Human-specific amino acid changes found in 103 protein-coding genes.</title>
        <authorList>
            <person name="Kitano T."/>
            <person name="Liu Y.-H."/>
            <person name="Ueda S."/>
            <person name="Saitou N."/>
        </authorList>
    </citation>
    <scope>NUCLEOTIDE SEQUENCE [GENOMIC DNA]</scope>
</reference>
<organism>
    <name type="scientific">Pan troglodytes</name>
    <name type="common">Chimpanzee</name>
    <dbReference type="NCBI Taxonomy" id="9598"/>
    <lineage>
        <taxon>Eukaryota</taxon>
        <taxon>Metazoa</taxon>
        <taxon>Chordata</taxon>
        <taxon>Craniata</taxon>
        <taxon>Vertebrata</taxon>
        <taxon>Euteleostomi</taxon>
        <taxon>Mammalia</taxon>
        <taxon>Eutheria</taxon>
        <taxon>Euarchontoglires</taxon>
        <taxon>Primates</taxon>
        <taxon>Haplorrhini</taxon>
        <taxon>Catarrhini</taxon>
        <taxon>Hominidae</taxon>
        <taxon>Pan</taxon>
    </lineage>
</organism>
<dbReference type="EMBL" id="AB041371">
    <property type="protein sequence ID" value="BAA94456.1"/>
    <property type="molecule type" value="Genomic_DNA"/>
</dbReference>
<dbReference type="RefSeq" id="NP_001009102.1">
    <property type="nucleotide sequence ID" value="NM_001009102.1"/>
</dbReference>
<dbReference type="SMR" id="P60020"/>
<dbReference type="FunCoup" id="P60020">
    <property type="interactions" value="904"/>
</dbReference>
<dbReference type="STRING" id="9598.ENSPTRP00000031384"/>
<dbReference type="GlyCosmos" id="P60020">
    <property type="glycosylation" value="2 sites, No reported glycans"/>
</dbReference>
<dbReference type="PaxDb" id="9598-ENSPTRP00000031384"/>
<dbReference type="Ensembl" id="ENSPTRT00000033962.2">
    <property type="protein sequence ID" value="ENSPTRP00000031384.1"/>
    <property type="gene ID" value="ENSPTRG00000018361.2"/>
</dbReference>
<dbReference type="GeneID" id="462833"/>
<dbReference type="KEGG" id="ptr:462833"/>
<dbReference type="CTD" id="3351"/>
<dbReference type="VGNC" id="VGNC:7894">
    <property type="gene designation" value="HTR1B"/>
</dbReference>
<dbReference type="eggNOG" id="KOG3656">
    <property type="taxonomic scope" value="Eukaryota"/>
</dbReference>
<dbReference type="GeneTree" id="ENSGT01010000222287"/>
<dbReference type="HOGENOM" id="CLU_009579_11_1_1"/>
<dbReference type="InParanoid" id="P60020"/>
<dbReference type="OMA" id="LIRFRYC"/>
<dbReference type="OrthoDB" id="7472at9604"/>
<dbReference type="TreeFam" id="TF316350"/>
<dbReference type="Proteomes" id="UP000002277">
    <property type="component" value="Chromosome 6"/>
</dbReference>
<dbReference type="Bgee" id="ENSPTRG00000018361">
    <property type="expression patterns" value="Expressed in primary visual cortex and 10 other cell types or tissues"/>
</dbReference>
<dbReference type="GO" id="GO:0030425">
    <property type="term" value="C:dendrite"/>
    <property type="evidence" value="ECO:0000318"/>
    <property type="project" value="GO_Central"/>
</dbReference>
<dbReference type="GO" id="GO:0005783">
    <property type="term" value="C:endoplasmic reticulum"/>
    <property type="evidence" value="ECO:0007669"/>
    <property type="project" value="Ensembl"/>
</dbReference>
<dbReference type="GO" id="GO:0098666">
    <property type="term" value="C:G protein-coupled serotonin receptor complex"/>
    <property type="evidence" value="ECO:0007669"/>
    <property type="project" value="Ensembl"/>
</dbReference>
<dbReference type="GO" id="GO:0005886">
    <property type="term" value="C:plasma membrane"/>
    <property type="evidence" value="ECO:0000250"/>
    <property type="project" value="UniProtKB"/>
</dbReference>
<dbReference type="GO" id="GO:0042734">
    <property type="term" value="C:presynaptic membrane"/>
    <property type="evidence" value="ECO:0007669"/>
    <property type="project" value="Ensembl"/>
</dbReference>
<dbReference type="GO" id="GO:0099154">
    <property type="term" value="C:serotonergic synapse"/>
    <property type="evidence" value="ECO:0007669"/>
    <property type="project" value="Ensembl"/>
</dbReference>
<dbReference type="GO" id="GO:0004993">
    <property type="term" value="F:G protein-coupled serotonin receptor activity"/>
    <property type="evidence" value="ECO:0000250"/>
    <property type="project" value="UniProtKB"/>
</dbReference>
<dbReference type="GO" id="GO:0001586">
    <property type="term" value="F:Gi/o-coupled serotonin receptor activity"/>
    <property type="evidence" value="ECO:0007669"/>
    <property type="project" value="Ensembl"/>
</dbReference>
<dbReference type="GO" id="GO:0030594">
    <property type="term" value="F:neurotransmitter receptor activity"/>
    <property type="evidence" value="ECO:0000318"/>
    <property type="project" value="GO_Central"/>
</dbReference>
<dbReference type="GO" id="GO:0051378">
    <property type="term" value="F:serotonin binding"/>
    <property type="evidence" value="ECO:0007669"/>
    <property type="project" value="Ensembl"/>
</dbReference>
<dbReference type="GO" id="GO:0099589">
    <property type="term" value="F:serotonin receptor activity"/>
    <property type="evidence" value="ECO:0007669"/>
    <property type="project" value="Ensembl"/>
</dbReference>
<dbReference type="GO" id="GO:0007198">
    <property type="term" value="P:adenylate cyclase-inhibiting serotonin receptor signaling pathway"/>
    <property type="evidence" value="ECO:0000250"/>
    <property type="project" value="UniProtKB"/>
</dbReference>
<dbReference type="GO" id="GO:0046849">
    <property type="term" value="P:bone remodeling"/>
    <property type="evidence" value="ECO:0007669"/>
    <property type="project" value="Ensembl"/>
</dbReference>
<dbReference type="GO" id="GO:0071312">
    <property type="term" value="P:cellular response to alkaloid"/>
    <property type="evidence" value="ECO:0000250"/>
    <property type="project" value="UniProtKB"/>
</dbReference>
<dbReference type="GO" id="GO:0071466">
    <property type="term" value="P:cellular response to xenobiotic stimulus"/>
    <property type="evidence" value="ECO:0000250"/>
    <property type="project" value="UniProtKB"/>
</dbReference>
<dbReference type="GO" id="GO:0007268">
    <property type="term" value="P:chemical synaptic transmission"/>
    <property type="evidence" value="ECO:0000318"/>
    <property type="project" value="GO_Central"/>
</dbReference>
<dbReference type="GO" id="GO:0007187">
    <property type="term" value="P:G protein-coupled receptor signaling pathway, coupled to cyclic nucleotide second messenger"/>
    <property type="evidence" value="ECO:0000318"/>
    <property type="project" value="GO_Central"/>
</dbReference>
<dbReference type="GO" id="GO:0014063">
    <property type="term" value="P:negative regulation of serotonin secretion"/>
    <property type="evidence" value="ECO:0000250"/>
    <property type="project" value="UniProtKB"/>
</dbReference>
<dbReference type="GO" id="GO:0007208">
    <property type="term" value="P:phospholipase C-activating serotonin receptor signaling pathway"/>
    <property type="evidence" value="ECO:0007669"/>
    <property type="project" value="Ensembl"/>
</dbReference>
<dbReference type="GO" id="GO:1904707">
    <property type="term" value="P:positive regulation of vascular associated smooth muscle cell proliferation"/>
    <property type="evidence" value="ECO:0007669"/>
    <property type="project" value="Ensembl"/>
</dbReference>
<dbReference type="GO" id="GO:0050795">
    <property type="term" value="P:regulation of behavior"/>
    <property type="evidence" value="ECO:0007669"/>
    <property type="project" value="InterPro"/>
</dbReference>
<dbReference type="GO" id="GO:0042310">
    <property type="term" value="P:vasoconstriction"/>
    <property type="evidence" value="ECO:0007669"/>
    <property type="project" value="InterPro"/>
</dbReference>
<dbReference type="CDD" id="cd15333">
    <property type="entry name" value="7tmA_5-HT1B_1D"/>
    <property type="match status" value="1"/>
</dbReference>
<dbReference type="Gene3D" id="1.20.1070.10">
    <property type="entry name" value="Rhodopsin 7-helix transmembrane proteins"/>
    <property type="match status" value="1"/>
</dbReference>
<dbReference type="InterPro" id="IPR002147">
    <property type="entry name" value="5HT1B_rcpt"/>
</dbReference>
<dbReference type="InterPro" id="IPR002231">
    <property type="entry name" value="5HT_rcpt"/>
</dbReference>
<dbReference type="InterPro" id="IPR000276">
    <property type="entry name" value="GPCR_Rhodpsn"/>
</dbReference>
<dbReference type="InterPro" id="IPR017452">
    <property type="entry name" value="GPCR_Rhodpsn_7TM"/>
</dbReference>
<dbReference type="PANTHER" id="PTHR24248:SF201">
    <property type="entry name" value="5-HYDROXYTRYPTAMINE RECEPTOR 1B"/>
    <property type="match status" value="1"/>
</dbReference>
<dbReference type="PANTHER" id="PTHR24248">
    <property type="entry name" value="ADRENERGIC RECEPTOR-RELATED G-PROTEIN COUPLED RECEPTOR"/>
    <property type="match status" value="1"/>
</dbReference>
<dbReference type="Pfam" id="PF00001">
    <property type="entry name" value="7tm_1"/>
    <property type="match status" value="1"/>
</dbReference>
<dbReference type="PRINTS" id="PR00513">
    <property type="entry name" value="5HT1BRECEPTR"/>
</dbReference>
<dbReference type="PRINTS" id="PR01101">
    <property type="entry name" value="5HTRECEPTOR"/>
</dbReference>
<dbReference type="PRINTS" id="PR00237">
    <property type="entry name" value="GPCRRHODOPSN"/>
</dbReference>
<dbReference type="SMART" id="SM01381">
    <property type="entry name" value="7TM_GPCR_Srsx"/>
    <property type="match status" value="1"/>
</dbReference>
<dbReference type="SUPFAM" id="SSF81321">
    <property type="entry name" value="Family A G protein-coupled receptor-like"/>
    <property type="match status" value="1"/>
</dbReference>
<dbReference type="PROSITE" id="PS00237">
    <property type="entry name" value="G_PROTEIN_RECEP_F1_1"/>
    <property type="match status" value="1"/>
</dbReference>
<dbReference type="PROSITE" id="PS50262">
    <property type="entry name" value="G_PROTEIN_RECEP_F1_2"/>
    <property type="match status" value="1"/>
</dbReference>
<proteinExistence type="inferred from homology"/>
<accession>P60020</accession>
<protein>
    <recommendedName>
        <fullName>5-hydroxytryptamine receptor 1B</fullName>
        <shortName>5-HT-1B</shortName>
        <shortName>5-HT1B</shortName>
    </recommendedName>
    <alternativeName>
        <fullName>Serotonin receptor 1B</fullName>
    </alternativeName>
</protein>
<comment type="function">
    <text evidence="1">G-protein coupled receptor for 5-hydroxytryptamine (serotonin). Also functions as a receptor for ergot alkaloid derivatives, various anxiolytic and antidepressant drugs and other psychoactive substances, such as lysergic acid diethylamide (LSD). Ligand binding causes a conformation change that triggers signaling via guanine nucleotide-binding proteins (G proteins) and modulates the activity of downstream effectors, such as adenylate cyclase. HTR1B is coupled to G(i)/G(o) G alpha proteins and mediates inhibitory neurotransmission by inhibiting adenylate cyclase activity. Arrestin family members inhibit signaling via G proteins and mediate activation of alternative signaling pathways. Regulates the release of 5-hydroxytryptamine, dopamine and acetylcholine in the brain, and thereby affects neural activity, nociceptive processing, pain perception, mood and behavior. Besides, plays a role in vasoconstriction of cerebral arteries.</text>
</comment>
<comment type="subunit">
    <text evidence="1">Homodimer. Heterodimer with HTR1D.</text>
</comment>
<comment type="subcellular location">
    <subcellularLocation>
        <location evidence="1">Cell membrane</location>
        <topology evidence="1">Multi-pass membrane protein</topology>
    </subcellularLocation>
</comment>
<comment type="domain">
    <text evidence="1">Ligands are bound in a hydrophobic pocket formed by the transmembrane helices.</text>
</comment>
<comment type="domain">
    <text evidence="1">A residue in the 7th transmembrane region ('Thr-355' in human, 'Asn-351' in mouse and rat) is important for species-specific sensitivity to various agonists.</text>
</comment>
<comment type="PTM">
    <text evidence="1">Phosphorylated. Desensitization of the receptor may be mediated by its phosphorylation.</text>
</comment>
<comment type="PTM">
    <text evidence="1">Palmitoylated.</text>
</comment>
<comment type="similarity">
    <text evidence="4">Belongs to the G-protein coupled receptor 1 family.</text>
</comment>
<gene>
    <name type="primary">HTR1B</name>
</gene>
<keyword id="KW-0085">Behavior</keyword>
<keyword id="KW-1003">Cell membrane</keyword>
<keyword id="KW-1015">Disulfide bond</keyword>
<keyword id="KW-0297">G-protein coupled receptor</keyword>
<keyword id="KW-0325">Glycoprotein</keyword>
<keyword id="KW-0449">Lipoprotein</keyword>
<keyword id="KW-0472">Membrane</keyword>
<keyword id="KW-0564">Palmitate</keyword>
<keyword id="KW-0597">Phosphoprotein</keyword>
<keyword id="KW-0675">Receptor</keyword>
<keyword id="KW-1185">Reference proteome</keyword>
<keyword id="KW-0807">Transducer</keyword>
<keyword id="KW-0812">Transmembrane</keyword>
<keyword id="KW-1133">Transmembrane helix</keyword>
<feature type="chain" id="PRO_0000068918" description="5-hydroxytryptamine receptor 1B">
    <location>
        <begin position="1"/>
        <end position="390"/>
    </location>
</feature>
<feature type="topological domain" description="Extracellular" evidence="1">
    <location>
        <begin position="1"/>
        <end position="46"/>
    </location>
</feature>
<feature type="transmembrane region" description="Helical; Name=1" evidence="1">
    <location>
        <begin position="47"/>
        <end position="72"/>
    </location>
</feature>
<feature type="topological domain" description="Cytoplasmic" evidence="1">
    <location>
        <begin position="73"/>
        <end position="86"/>
    </location>
</feature>
<feature type="transmembrane region" description="Helical; Name=2" evidence="1">
    <location>
        <begin position="87"/>
        <end position="111"/>
    </location>
</feature>
<feature type="topological domain" description="Extracellular" evidence="1">
    <location>
        <begin position="112"/>
        <end position="119"/>
    </location>
</feature>
<feature type="transmembrane region" description="Helical; Name=3" evidence="1">
    <location>
        <begin position="120"/>
        <end position="145"/>
    </location>
</feature>
<feature type="topological domain" description="Cytoplasmic" evidence="1">
    <location>
        <begin position="146"/>
        <end position="165"/>
    </location>
</feature>
<feature type="transmembrane region" description="Helical; Name=4" evidence="1">
    <location>
        <begin position="166"/>
        <end position="184"/>
    </location>
</feature>
<feature type="topological domain" description="Extracellular" evidence="1">
    <location>
        <begin position="185"/>
        <end position="205"/>
    </location>
</feature>
<feature type="transmembrane region" description="Helical; Name=5" evidence="1">
    <location>
        <begin position="206"/>
        <end position="229"/>
    </location>
</feature>
<feature type="topological domain" description="Cytoplasmic" evidence="1">
    <location>
        <begin position="230"/>
        <end position="315"/>
    </location>
</feature>
<feature type="transmembrane region" description="Helical; Name=6" evidence="1">
    <location>
        <begin position="316"/>
        <end position="337"/>
    </location>
</feature>
<feature type="topological domain" description="Extracellular" evidence="1">
    <location>
        <begin position="338"/>
        <end position="347"/>
    </location>
</feature>
<feature type="transmembrane region" description="Helical; Name=7" evidence="1">
    <location>
        <begin position="348"/>
        <end position="370"/>
    </location>
</feature>
<feature type="topological domain" description="Cytoplasmic" evidence="1">
    <location>
        <begin position="371"/>
        <end position="390"/>
    </location>
</feature>
<feature type="region of interest" description="Disordered" evidence="5">
    <location>
        <begin position="259"/>
        <end position="281"/>
    </location>
</feature>
<feature type="short sequence motif" description="DRY motif; important for ligand-induced conformation changes and signaling" evidence="2">
    <location>
        <begin position="146"/>
        <end position="148"/>
    </location>
</feature>
<feature type="short sequence motif" description="NPxxY motif; important for ligand-induced conformation changes and signaling" evidence="2">
    <location>
        <begin position="365"/>
        <end position="369"/>
    </location>
</feature>
<feature type="compositionally biased region" description="Polar residues" evidence="5">
    <location>
        <begin position="259"/>
        <end position="272"/>
    </location>
</feature>
<feature type="binding site" evidence="1">
    <location>
        <position position="129"/>
    </location>
    <ligand>
        <name>ergotamine</name>
        <dbReference type="ChEBI" id="CHEBI:190463"/>
        <note>agonist</note>
    </ligand>
</feature>
<feature type="binding site" evidence="1">
    <location>
        <position position="134"/>
    </location>
    <ligand>
        <name>ergotamine</name>
        <dbReference type="ChEBI" id="CHEBI:190463"/>
        <note>agonist</note>
    </ligand>
</feature>
<feature type="binding site" evidence="1">
    <location>
        <position position="201"/>
    </location>
    <ligand>
        <name>ergotamine</name>
        <dbReference type="ChEBI" id="CHEBI:190463"/>
        <note>agonist</note>
    </ligand>
</feature>
<feature type="site" description="Important for species-specific agonist sensitivity" evidence="1">
    <location>
        <position position="355"/>
    </location>
</feature>
<feature type="lipid moiety-binding region" description="S-palmitoyl cysteine" evidence="3">
    <location>
        <position position="388"/>
    </location>
</feature>
<feature type="glycosylation site" description="N-linked (GlcNAc...) asparagine" evidence="3">
    <location>
        <position position="24"/>
    </location>
</feature>
<feature type="glycosylation site" description="N-linked (GlcNAc...) asparagine" evidence="3">
    <location>
        <position position="32"/>
    </location>
</feature>
<feature type="disulfide bond" evidence="4">
    <location>
        <begin position="122"/>
        <end position="199"/>
    </location>
</feature>